<accession>Q9LNF6</accession>
<accession>F4HWR9</accession>
<accession>Q1PFM4</accession>
<accession>Q9C7Z4</accession>
<feature type="chain" id="PRO_0000283322" description="F-box protein At1g48060">
    <location>
        <begin position="1"/>
        <end position="365"/>
    </location>
</feature>
<feature type="domain" description="F-box">
    <location>
        <begin position="20"/>
        <end position="69"/>
    </location>
</feature>
<feature type="region of interest" description="Disordered" evidence="1">
    <location>
        <begin position="1"/>
        <end position="20"/>
    </location>
</feature>
<organism>
    <name type="scientific">Arabidopsis thaliana</name>
    <name type="common">Mouse-ear cress</name>
    <dbReference type="NCBI Taxonomy" id="3702"/>
    <lineage>
        <taxon>Eukaryota</taxon>
        <taxon>Viridiplantae</taxon>
        <taxon>Streptophyta</taxon>
        <taxon>Embryophyta</taxon>
        <taxon>Tracheophyta</taxon>
        <taxon>Spermatophyta</taxon>
        <taxon>Magnoliopsida</taxon>
        <taxon>eudicotyledons</taxon>
        <taxon>Gunneridae</taxon>
        <taxon>Pentapetalae</taxon>
        <taxon>rosids</taxon>
        <taxon>malvids</taxon>
        <taxon>Brassicales</taxon>
        <taxon>Brassicaceae</taxon>
        <taxon>Camelineae</taxon>
        <taxon>Arabidopsis</taxon>
    </lineage>
</organism>
<keyword id="KW-1185">Reference proteome</keyword>
<comment type="caution">
    <text evidence="2">It is uncertain whether Met-1 or Met-13 is the initiator.</text>
</comment>
<comment type="sequence caution" evidence="2">
    <conflict type="erroneous gene model prediction">
        <sequence resource="EMBL-CDS" id="AAF79533"/>
    </conflict>
</comment>
<comment type="sequence caution" evidence="2">
    <conflict type="erroneous gene model prediction">
        <sequence resource="EMBL-CDS" id="AAG51533"/>
    </conflict>
</comment>
<protein>
    <recommendedName>
        <fullName>F-box protein At1g48060</fullName>
    </recommendedName>
</protein>
<evidence type="ECO:0000256" key="1">
    <source>
        <dbReference type="SAM" id="MobiDB-lite"/>
    </source>
</evidence>
<evidence type="ECO:0000305" key="2"/>
<name>FB48_ARATH</name>
<dbReference type="EMBL" id="AC023673">
    <property type="protein sequence ID" value="AAF79533.1"/>
    <property type="status" value="ALT_SEQ"/>
    <property type="molecule type" value="Genomic_DNA"/>
</dbReference>
<dbReference type="EMBL" id="AC051631">
    <property type="protein sequence ID" value="AAG51533.1"/>
    <property type="status" value="ALT_SEQ"/>
    <property type="molecule type" value="Genomic_DNA"/>
</dbReference>
<dbReference type="EMBL" id="CP002684">
    <property type="status" value="NOT_ANNOTATED_CDS"/>
    <property type="molecule type" value="Genomic_DNA"/>
</dbReference>
<dbReference type="EMBL" id="DQ446339">
    <property type="protein sequence ID" value="ABE65700.1"/>
    <property type="molecule type" value="mRNA"/>
</dbReference>
<dbReference type="FunCoup" id="Q9LNF6">
    <property type="interactions" value="3"/>
</dbReference>
<dbReference type="STRING" id="3702.Q9LNF6"/>
<dbReference type="PaxDb" id="3702-AT1G48060.1"/>
<dbReference type="Araport" id="AT1G48060"/>
<dbReference type="TAIR" id="AT1G48060"/>
<dbReference type="HOGENOM" id="CLU_027176_8_0_1"/>
<dbReference type="InParanoid" id="Q9LNF6"/>
<dbReference type="PRO" id="PR:Q9LNF6"/>
<dbReference type="Proteomes" id="UP000006548">
    <property type="component" value="Chromosome 1"/>
</dbReference>
<dbReference type="ExpressionAtlas" id="Q9LNF6">
    <property type="expression patterns" value="baseline and differential"/>
</dbReference>
<dbReference type="CDD" id="cd22157">
    <property type="entry name" value="F-box_AtFBW1-like"/>
    <property type="match status" value="1"/>
</dbReference>
<dbReference type="Gene3D" id="1.20.1280.50">
    <property type="match status" value="1"/>
</dbReference>
<dbReference type="InterPro" id="IPR013187">
    <property type="entry name" value="F-box-assoc_dom_typ3"/>
</dbReference>
<dbReference type="InterPro" id="IPR017451">
    <property type="entry name" value="F-box-assoc_interact_dom"/>
</dbReference>
<dbReference type="InterPro" id="IPR036047">
    <property type="entry name" value="F-box-like_dom_sf"/>
</dbReference>
<dbReference type="InterPro" id="IPR001810">
    <property type="entry name" value="F-box_dom"/>
</dbReference>
<dbReference type="NCBIfam" id="TIGR01640">
    <property type="entry name" value="F_box_assoc_1"/>
    <property type="match status" value="1"/>
</dbReference>
<dbReference type="PANTHER" id="PTHR31111">
    <property type="entry name" value="BNAA05G37150D PROTEIN-RELATED"/>
    <property type="match status" value="1"/>
</dbReference>
<dbReference type="PANTHER" id="PTHR31111:SF42">
    <property type="entry name" value="F-BOX DOMAIN-CONTAINING PROTEIN"/>
    <property type="match status" value="1"/>
</dbReference>
<dbReference type="Pfam" id="PF00646">
    <property type="entry name" value="F-box"/>
    <property type="match status" value="1"/>
</dbReference>
<dbReference type="Pfam" id="PF08268">
    <property type="entry name" value="FBA_3"/>
    <property type="match status" value="1"/>
</dbReference>
<dbReference type="SUPFAM" id="SSF81383">
    <property type="entry name" value="F-box domain"/>
    <property type="match status" value="1"/>
</dbReference>
<sequence length="365" mass="42266">MKPQEEEEKNENMARKRSKSSSSLSIPLDIATDIFLRLPAKSVVRFSCVAKHWSSITTAPYFTNSFETRPNLLFFFKEADRFFVVTVPKPNRRPNESVSHTSSQILDSYQTPYPKHSCFTIKTESVHGLICFQRGTKPIVWNPTMRKFKPLRKPDKSWESLTVFLGYDPLERTHKVVAMPCDKASDECRILTLGSADQESWRTVKTNYKHHPSRGNRKNNYGPCRCINGVLYYLAEIDRHRLIGKFAFLGHSNVKNSLPMWVLEGEKKGEWSTYNFLPLSHYDRRLEFHFKLIGITNDGELIYVPNTVFKTFEVIYIDPIRKTFSLVKYEGVADKGFRQRNGLGEDKPLRGIQYSPNHVETLLSL</sequence>
<gene>
    <name type="ordered locus">At1g48060</name>
    <name type="ORF">F21D18.25</name>
    <name type="ORF">T2J15.3</name>
</gene>
<proteinExistence type="evidence at transcript level"/>
<reference key="1">
    <citation type="journal article" date="2000" name="Nature">
        <title>Sequence and analysis of chromosome 1 of the plant Arabidopsis thaliana.</title>
        <authorList>
            <person name="Theologis A."/>
            <person name="Ecker J.R."/>
            <person name="Palm C.J."/>
            <person name="Federspiel N.A."/>
            <person name="Kaul S."/>
            <person name="White O."/>
            <person name="Alonso J."/>
            <person name="Altafi H."/>
            <person name="Araujo R."/>
            <person name="Bowman C.L."/>
            <person name="Brooks S.Y."/>
            <person name="Buehler E."/>
            <person name="Chan A."/>
            <person name="Chao Q."/>
            <person name="Chen H."/>
            <person name="Cheuk R.F."/>
            <person name="Chin C.W."/>
            <person name="Chung M.K."/>
            <person name="Conn L."/>
            <person name="Conway A.B."/>
            <person name="Conway A.R."/>
            <person name="Creasy T.H."/>
            <person name="Dewar K."/>
            <person name="Dunn P."/>
            <person name="Etgu P."/>
            <person name="Feldblyum T.V."/>
            <person name="Feng J.-D."/>
            <person name="Fong B."/>
            <person name="Fujii C.Y."/>
            <person name="Gill J.E."/>
            <person name="Goldsmith A.D."/>
            <person name="Haas B."/>
            <person name="Hansen N.F."/>
            <person name="Hughes B."/>
            <person name="Huizar L."/>
            <person name="Hunter J.L."/>
            <person name="Jenkins J."/>
            <person name="Johnson-Hopson C."/>
            <person name="Khan S."/>
            <person name="Khaykin E."/>
            <person name="Kim C.J."/>
            <person name="Koo H.L."/>
            <person name="Kremenetskaia I."/>
            <person name="Kurtz D.B."/>
            <person name="Kwan A."/>
            <person name="Lam B."/>
            <person name="Langin-Hooper S."/>
            <person name="Lee A."/>
            <person name="Lee J.M."/>
            <person name="Lenz C.A."/>
            <person name="Li J.H."/>
            <person name="Li Y.-P."/>
            <person name="Lin X."/>
            <person name="Liu S.X."/>
            <person name="Liu Z.A."/>
            <person name="Luros J.S."/>
            <person name="Maiti R."/>
            <person name="Marziali A."/>
            <person name="Militscher J."/>
            <person name="Miranda M."/>
            <person name="Nguyen M."/>
            <person name="Nierman W.C."/>
            <person name="Osborne B.I."/>
            <person name="Pai G."/>
            <person name="Peterson J."/>
            <person name="Pham P.K."/>
            <person name="Rizzo M."/>
            <person name="Rooney T."/>
            <person name="Rowley D."/>
            <person name="Sakano H."/>
            <person name="Salzberg S.L."/>
            <person name="Schwartz J.R."/>
            <person name="Shinn P."/>
            <person name="Southwick A.M."/>
            <person name="Sun H."/>
            <person name="Tallon L.J."/>
            <person name="Tambunga G."/>
            <person name="Toriumi M.J."/>
            <person name="Town C.D."/>
            <person name="Utterback T."/>
            <person name="Van Aken S."/>
            <person name="Vaysberg M."/>
            <person name="Vysotskaia V.S."/>
            <person name="Walker M."/>
            <person name="Wu D."/>
            <person name="Yu G."/>
            <person name="Fraser C.M."/>
            <person name="Venter J.C."/>
            <person name="Davis R.W."/>
        </authorList>
    </citation>
    <scope>NUCLEOTIDE SEQUENCE [LARGE SCALE GENOMIC DNA]</scope>
    <source>
        <strain>cv. Columbia</strain>
    </source>
</reference>
<reference key="2">
    <citation type="journal article" date="2017" name="Plant J.">
        <title>Araport11: a complete reannotation of the Arabidopsis thaliana reference genome.</title>
        <authorList>
            <person name="Cheng C.Y."/>
            <person name="Krishnakumar V."/>
            <person name="Chan A.P."/>
            <person name="Thibaud-Nissen F."/>
            <person name="Schobel S."/>
            <person name="Town C.D."/>
        </authorList>
    </citation>
    <scope>GENOME REANNOTATION</scope>
    <source>
        <strain>cv. Columbia</strain>
    </source>
</reference>
<reference key="3">
    <citation type="journal article" date="2006" name="Plant Biotechnol. J.">
        <title>Simultaneous high-throughput recombinational cloning of open reading frames in closed and open configurations.</title>
        <authorList>
            <person name="Underwood B.A."/>
            <person name="Vanderhaeghen R."/>
            <person name="Whitford R."/>
            <person name="Town C.D."/>
            <person name="Hilson P."/>
        </authorList>
    </citation>
    <scope>NUCLEOTIDE SEQUENCE [LARGE SCALE MRNA] OF 13-244</scope>
    <source>
        <strain>cv. Columbia</strain>
    </source>
</reference>